<evidence type="ECO:0000250" key="1">
    <source>
        <dbReference type="UniProtKB" id="Q96AW1"/>
    </source>
</evidence>
<evidence type="ECO:0000255" key="2"/>
<evidence type="ECO:0000256" key="3">
    <source>
        <dbReference type="SAM" id="MobiDB-lite"/>
    </source>
</evidence>
<evidence type="ECO:0000303" key="4">
    <source>
    </source>
</evidence>
<evidence type="ECO:0000305" key="5"/>
<feature type="signal peptide" evidence="2">
    <location>
        <begin position="1"/>
        <end position="22"/>
    </location>
</feature>
<feature type="chain" id="PRO_0000325918" description="WW domain binding protein VOPP1">
    <location>
        <begin position="23"/>
        <end position="172"/>
    </location>
</feature>
<feature type="topological domain" description="Extracellular" evidence="2">
    <location>
        <begin position="23"/>
        <end position="60"/>
    </location>
</feature>
<feature type="transmembrane region" description="Helical" evidence="2">
    <location>
        <begin position="61"/>
        <end position="81"/>
    </location>
</feature>
<feature type="topological domain" description="Cytoplasmic" evidence="2">
    <location>
        <begin position="82"/>
        <end position="172"/>
    </location>
</feature>
<feature type="region of interest" description="Disordered" evidence="3">
    <location>
        <begin position="139"/>
        <end position="172"/>
    </location>
</feature>
<feature type="compositionally biased region" description="Pro residues" evidence="3">
    <location>
        <begin position="151"/>
        <end position="165"/>
    </location>
</feature>
<feature type="splice variant" id="VSP_032478" description="In isoform 2." evidence="4">
    <original>GAQQM</original>
    <variation>ELTDS</variation>
    <location>
        <begin position="110"/>
        <end position="114"/>
    </location>
</feature>
<feature type="splice variant" id="VSP_032479" description="In isoform 2." evidence="4">
    <location>
        <begin position="115"/>
        <end position="172"/>
    </location>
</feature>
<feature type="sequence conflict" description="In Ref. 1; BAC27562." evidence="5" ref="1">
    <original>R</original>
    <variation>H</variation>
    <location>
        <position position="40"/>
    </location>
</feature>
<organism>
    <name type="scientific">Mus musculus</name>
    <name type="common">Mouse</name>
    <dbReference type="NCBI Taxonomy" id="10090"/>
    <lineage>
        <taxon>Eukaryota</taxon>
        <taxon>Metazoa</taxon>
        <taxon>Chordata</taxon>
        <taxon>Craniata</taxon>
        <taxon>Vertebrata</taxon>
        <taxon>Euteleostomi</taxon>
        <taxon>Mammalia</taxon>
        <taxon>Eutheria</taxon>
        <taxon>Euarchontoglires</taxon>
        <taxon>Glires</taxon>
        <taxon>Rodentia</taxon>
        <taxon>Myomorpha</taxon>
        <taxon>Muroidea</taxon>
        <taxon>Muridae</taxon>
        <taxon>Murinae</taxon>
        <taxon>Mus</taxon>
        <taxon>Mus</taxon>
    </lineage>
</organism>
<reference key="1">
    <citation type="journal article" date="2005" name="Science">
        <title>The transcriptional landscape of the mammalian genome.</title>
        <authorList>
            <person name="Carninci P."/>
            <person name="Kasukawa T."/>
            <person name="Katayama S."/>
            <person name="Gough J."/>
            <person name="Frith M.C."/>
            <person name="Maeda N."/>
            <person name="Oyama R."/>
            <person name="Ravasi T."/>
            <person name="Lenhard B."/>
            <person name="Wells C."/>
            <person name="Kodzius R."/>
            <person name="Shimokawa K."/>
            <person name="Bajic V.B."/>
            <person name="Brenner S.E."/>
            <person name="Batalov S."/>
            <person name="Forrest A.R."/>
            <person name="Zavolan M."/>
            <person name="Davis M.J."/>
            <person name="Wilming L.G."/>
            <person name="Aidinis V."/>
            <person name="Allen J.E."/>
            <person name="Ambesi-Impiombato A."/>
            <person name="Apweiler R."/>
            <person name="Aturaliya R.N."/>
            <person name="Bailey T.L."/>
            <person name="Bansal M."/>
            <person name="Baxter L."/>
            <person name="Beisel K.W."/>
            <person name="Bersano T."/>
            <person name="Bono H."/>
            <person name="Chalk A.M."/>
            <person name="Chiu K.P."/>
            <person name="Choudhary V."/>
            <person name="Christoffels A."/>
            <person name="Clutterbuck D.R."/>
            <person name="Crowe M.L."/>
            <person name="Dalla E."/>
            <person name="Dalrymple B.P."/>
            <person name="de Bono B."/>
            <person name="Della Gatta G."/>
            <person name="di Bernardo D."/>
            <person name="Down T."/>
            <person name="Engstrom P."/>
            <person name="Fagiolini M."/>
            <person name="Faulkner G."/>
            <person name="Fletcher C.F."/>
            <person name="Fukushima T."/>
            <person name="Furuno M."/>
            <person name="Futaki S."/>
            <person name="Gariboldi M."/>
            <person name="Georgii-Hemming P."/>
            <person name="Gingeras T.R."/>
            <person name="Gojobori T."/>
            <person name="Green R.E."/>
            <person name="Gustincich S."/>
            <person name="Harbers M."/>
            <person name="Hayashi Y."/>
            <person name="Hensch T.K."/>
            <person name="Hirokawa N."/>
            <person name="Hill D."/>
            <person name="Huminiecki L."/>
            <person name="Iacono M."/>
            <person name="Ikeo K."/>
            <person name="Iwama A."/>
            <person name="Ishikawa T."/>
            <person name="Jakt M."/>
            <person name="Kanapin A."/>
            <person name="Katoh M."/>
            <person name="Kawasawa Y."/>
            <person name="Kelso J."/>
            <person name="Kitamura H."/>
            <person name="Kitano H."/>
            <person name="Kollias G."/>
            <person name="Krishnan S.P."/>
            <person name="Kruger A."/>
            <person name="Kummerfeld S.K."/>
            <person name="Kurochkin I.V."/>
            <person name="Lareau L.F."/>
            <person name="Lazarevic D."/>
            <person name="Lipovich L."/>
            <person name="Liu J."/>
            <person name="Liuni S."/>
            <person name="McWilliam S."/>
            <person name="Madan Babu M."/>
            <person name="Madera M."/>
            <person name="Marchionni L."/>
            <person name="Matsuda H."/>
            <person name="Matsuzawa S."/>
            <person name="Miki H."/>
            <person name="Mignone F."/>
            <person name="Miyake S."/>
            <person name="Morris K."/>
            <person name="Mottagui-Tabar S."/>
            <person name="Mulder N."/>
            <person name="Nakano N."/>
            <person name="Nakauchi H."/>
            <person name="Ng P."/>
            <person name="Nilsson R."/>
            <person name="Nishiguchi S."/>
            <person name="Nishikawa S."/>
            <person name="Nori F."/>
            <person name="Ohara O."/>
            <person name="Okazaki Y."/>
            <person name="Orlando V."/>
            <person name="Pang K.C."/>
            <person name="Pavan W.J."/>
            <person name="Pavesi G."/>
            <person name="Pesole G."/>
            <person name="Petrovsky N."/>
            <person name="Piazza S."/>
            <person name="Reed J."/>
            <person name="Reid J.F."/>
            <person name="Ring B.Z."/>
            <person name="Ringwald M."/>
            <person name="Rost B."/>
            <person name="Ruan Y."/>
            <person name="Salzberg S.L."/>
            <person name="Sandelin A."/>
            <person name="Schneider C."/>
            <person name="Schoenbach C."/>
            <person name="Sekiguchi K."/>
            <person name="Semple C.A."/>
            <person name="Seno S."/>
            <person name="Sessa L."/>
            <person name="Sheng Y."/>
            <person name="Shibata Y."/>
            <person name="Shimada H."/>
            <person name="Shimada K."/>
            <person name="Silva D."/>
            <person name="Sinclair B."/>
            <person name="Sperling S."/>
            <person name="Stupka E."/>
            <person name="Sugiura K."/>
            <person name="Sultana R."/>
            <person name="Takenaka Y."/>
            <person name="Taki K."/>
            <person name="Tammoja K."/>
            <person name="Tan S.L."/>
            <person name="Tang S."/>
            <person name="Taylor M.S."/>
            <person name="Tegner J."/>
            <person name="Teichmann S.A."/>
            <person name="Ueda H.R."/>
            <person name="van Nimwegen E."/>
            <person name="Verardo R."/>
            <person name="Wei C.L."/>
            <person name="Yagi K."/>
            <person name="Yamanishi H."/>
            <person name="Zabarovsky E."/>
            <person name="Zhu S."/>
            <person name="Zimmer A."/>
            <person name="Hide W."/>
            <person name="Bult C."/>
            <person name="Grimmond S.M."/>
            <person name="Teasdale R.D."/>
            <person name="Liu E.T."/>
            <person name="Brusic V."/>
            <person name="Quackenbush J."/>
            <person name="Wahlestedt C."/>
            <person name="Mattick J.S."/>
            <person name="Hume D.A."/>
            <person name="Kai C."/>
            <person name="Sasaki D."/>
            <person name="Tomaru Y."/>
            <person name="Fukuda S."/>
            <person name="Kanamori-Katayama M."/>
            <person name="Suzuki M."/>
            <person name="Aoki J."/>
            <person name="Arakawa T."/>
            <person name="Iida J."/>
            <person name="Imamura K."/>
            <person name="Itoh M."/>
            <person name="Kato T."/>
            <person name="Kawaji H."/>
            <person name="Kawagashira N."/>
            <person name="Kawashima T."/>
            <person name="Kojima M."/>
            <person name="Kondo S."/>
            <person name="Konno H."/>
            <person name="Nakano K."/>
            <person name="Ninomiya N."/>
            <person name="Nishio T."/>
            <person name="Okada M."/>
            <person name="Plessy C."/>
            <person name="Shibata K."/>
            <person name="Shiraki T."/>
            <person name="Suzuki S."/>
            <person name="Tagami M."/>
            <person name="Waki K."/>
            <person name="Watahiki A."/>
            <person name="Okamura-Oho Y."/>
            <person name="Suzuki H."/>
            <person name="Kawai J."/>
            <person name="Hayashizaki Y."/>
        </authorList>
    </citation>
    <scope>NUCLEOTIDE SEQUENCE [LARGE SCALE MRNA] (ISOFORMS 1 AND 2)</scope>
    <source>
        <strain>C57BL/6J</strain>
        <strain>NOD</strain>
        <tissue>Inner ear</tissue>
        <tissue>Medulla oblongata</tissue>
        <tissue>Thymus</tissue>
    </source>
</reference>
<reference key="2">
    <citation type="journal article" date="2004" name="Genome Res.">
        <title>The status, quality, and expansion of the NIH full-length cDNA project: the Mammalian Gene Collection (MGC).</title>
        <authorList>
            <consortium name="The MGC Project Team"/>
        </authorList>
    </citation>
    <scope>NUCLEOTIDE SEQUENCE [LARGE SCALE MRNA] (ISOFORM 1)</scope>
    <source>
        <tissue>Eye</tissue>
    </source>
</reference>
<gene>
    <name type="primary">Vopp1</name>
    <name type="synonym">Ecop</name>
</gene>
<keyword id="KW-0025">Alternative splicing</keyword>
<keyword id="KW-0968">Cytoplasmic vesicle</keyword>
<keyword id="KW-0967">Endosome</keyword>
<keyword id="KW-0458">Lysosome</keyword>
<keyword id="KW-0472">Membrane</keyword>
<keyword id="KW-1185">Reference proteome</keyword>
<keyword id="KW-0732">Signal</keyword>
<keyword id="KW-0804">Transcription</keyword>
<keyword id="KW-0805">Transcription regulation</keyword>
<keyword id="KW-0812">Transmembrane</keyword>
<keyword id="KW-1133">Transmembrane helix</keyword>
<name>VOPP1_MOUSE</name>
<proteinExistence type="evidence at transcript level"/>
<protein>
    <recommendedName>
        <fullName evidence="5">WW domain binding protein VOPP1</fullName>
    </recommendedName>
    <alternativeName>
        <fullName>EGFR-coamplified and overexpressed protein</fullName>
        <shortName>ECop</shortName>
    </alternativeName>
    <alternativeName>
        <fullName>Vesicular, overexpressed in cancer, prosurvival protein 1</fullName>
    </alternativeName>
</protein>
<comment type="function">
    <text evidence="1">Increases the transcriptional activity of NFKB1 by facilitating its nuclear translocation, DNA-binding and associated apoptotic response, when overexpressed. May sequester WWOX in lysosomal vesicles and thereby regulate WWOX role as tumor suppressor.</text>
</comment>
<comment type="subunit">
    <text evidence="1">Interacts with WWOX (via WW domain).</text>
</comment>
<comment type="subcellular location">
    <subcellularLocation>
        <location evidence="1">Cytoplasmic vesicle membrane</location>
        <topology evidence="1">Single-pass type I membrane protein</topology>
    </subcellularLocation>
    <subcellularLocation>
        <location evidence="1">Late endosome membrane</location>
        <topology evidence="1">Single-pass membrane protein</topology>
    </subcellularLocation>
    <subcellularLocation>
        <location evidence="1">Lysosome membrane</location>
        <topology evidence="1">Single-pass membrane protein</topology>
    </subcellularLocation>
    <text evidence="1">When overexpressed, localizes in the nucleus and perinuclear regions.</text>
</comment>
<comment type="alternative products">
    <event type="alternative splicing"/>
    <isoform>
        <id>Q8R1C3-1</id>
        <name>1</name>
        <sequence type="displayed"/>
    </isoform>
    <isoform>
        <id>Q8R1C3-2</id>
        <name>2</name>
        <sequence type="described" ref="VSP_032478 VSP_032479"/>
    </isoform>
</comment>
<comment type="similarity">
    <text evidence="5">Belongs to the VOPP1/ECOP family.</text>
</comment>
<accession>Q8R1C3</accession>
<accession>Q3TZ79</accession>
<accession>Q8C0B7</accession>
<dbReference type="EMBL" id="AK030975">
    <property type="protein sequence ID" value="BAC27198.1"/>
    <property type="molecule type" value="mRNA"/>
</dbReference>
<dbReference type="EMBL" id="AK031812">
    <property type="protein sequence ID" value="BAC27562.1"/>
    <property type="molecule type" value="mRNA"/>
</dbReference>
<dbReference type="EMBL" id="AK158041">
    <property type="protein sequence ID" value="BAE34331.1"/>
    <property type="molecule type" value="mRNA"/>
</dbReference>
<dbReference type="EMBL" id="AK170152">
    <property type="protein sequence ID" value="BAE41599.1"/>
    <property type="molecule type" value="mRNA"/>
</dbReference>
<dbReference type="EMBL" id="AK170832">
    <property type="protein sequence ID" value="BAE42060.1"/>
    <property type="molecule type" value="mRNA"/>
</dbReference>
<dbReference type="EMBL" id="BC024822">
    <property type="protein sequence ID" value="AAH24822.1"/>
    <property type="molecule type" value="mRNA"/>
</dbReference>
<dbReference type="CCDS" id="CCDS39497.1">
    <molecule id="Q8R1C3-1"/>
</dbReference>
<dbReference type="RefSeq" id="NP_666280.1">
    <molecule id="Q8R1C3-1"/>
    <property type="nucleotide sequence ID" value="NM_146168.1"/>
</dbReference>
<dbReference type="BioGRID" id="231209">
    <property type="interactions" value="1"/>
</dbReference>
<dbReference type="FunCoup" id="Q8R1C3">
    <property type="interactions" value="672"/>
</dbReference>
<dbReference type="STRING" id="10090.ENSMUSP00000109936"/>
<dbReference type="PhosphoSitePlus" id="Q8R1C3"/>
<dbReference type="PaxDb" id="10090-ENSMUSP00000109936"/>
<dbReference type="ProteomicsDB" id="300175">
    <molecule id="Q8R1C3-1"/>
</dbReference>
<dbReference type="ProteomicsDB" id="300176">
    <molecule id="Q8R1C3-2"/>
</dbReference>
<dbReference type="Antibodypedia" id="27923">
    <property type="antibodies" value="118 antibodies from 20 providers"/>
</dbReference>
<dbReference type="DNASU" id="232023"/>
<dbReference type="Ensembl" id="ENSMUST00000114297.5">
    <molecule id="Q8R1C3-1"/>
    <property type="protein sequence ID" value="ENSMUSP00000109936.3"/>
    <property type="gene ID" value="ENSMUSG00000037788.15"/>
</dbReference>
<dbReference type="Ensembl" id="ENSMUST00000127485.8">
    <molecule id="Q8R1C3-2"/>
    <property type="protein sequence ID" value="ENSMUSP00000115377.2"/>
    <property type="gene ID" value="ENSMUSG00000037788.15"/>
</dbReference>
<dbReference type="GeneID" id="232023"/>
<dbReference type="KEGG" id="mmu:232023"/>
<dbReference type="UCSC" id="uc009cco.1">
    <molecule id="Q8R1C3-1"/>
    <property type="organism name" value="mouse"/>
</dbReference>
<dbReference type="AGR" id="MGI:2141658"/>
<dbReference type="CTD" id="81552"/>
<dbReference type="MGI" id="MGI:2141658">
    <property type="gene designation" value="Vopp1"/>
</dbReference>
<dbReference type="VEuPathDB" id="HostDB:ENSMUSG00000037788"/>
<dbReference type="eggNOG" id="ENOG502RYIF">
    <property type="taxonomic scope" value="Eukaryota"/>
</dbReference>
<dbReference type="GeneTree" id="ENSGT00390000015821"/>
<dbReference type="HOGENOM" id="CLU_2120306_0_0_1"/>
<dbReference type="InParanoid" id="Q8R1C3"/>
<dbReference type="OMA" id="FLECIEA"/>
<dbReference type="OrthoDB" id="6629737at2759"/>
<dbReference type="PhylomeDB" id="Q8R1C3"/>
<dbReference type="TreeFam" id="TF332098"/>
<dbReference type="BioGRID-ORCS" id="232023">
    <property type="hits" value="1 hit in 76 CRISPR screens"/>
</dbReference>
<dbReference type="ChiTaRS" id="Vopp1">
    <property type="organism name" value="mouse"/>
</dbReference>
<dbReference type="PRO" id="PR:Q8R1C3"/>
<dbReference type="Proteomes" id="UP000000589">
    <property type="component" value="Chromosome 6"/>
</dbReference>
<dbReference type="RNAct" id="Q8R1C3">
    <property type="molecule type" value="protein"/>
</dbReference>
<dbReference type="Bgee" id="ENSMUSG00000037788">
    <property type="expression patterns" value="Expressed in retinal neural layer and 263 other cell types or tissues"/>
</dbReference>
<dbReference type="ExpressionAtlas" id="Q8R1C3">
    <property type="expression patterns" value="baseline and differential"/>
</dbReference>
<dbReference type="GO" id="GO:0030659">
    <property type="term" value="C:cytoplasmic vesicle membrane"/>
    <property type="evidence" value="ECO:0000250"/>
    <property type="project" value="UniProtKB"/>
</dbReference>
<dbReference type="GO" id="GO:0031902">
    <property type="term" value="C:late endosome membrane"/>
    <property type="evidence" value="ECO:0007669"/>
    <property type="project" value="UniProtKB-SubCell"/>
</dbReference>
<dbReference type="GO" id="GO:0005765">
    <property type="term" value="C:lysosomal membrane"/>
    <property type="evidence" value="ECO:0007669"/>
    <property type="project" value="UniProtKB-SubCell"/>
</dbReference>
<dbReference type="GO" id="GO:0031090">
    <property type="term" value="C:organelle membrane"/>
    <property type="evidence" value="ECO:0000250"/>
    <property type="project" value="UniProtKB"/>
</dbReference>
<dbReference type="GO" id="GO:0019899">
    <property type="term" value="F:enzyme binding"/>
    <property type="evidence" value="ECO:0007669"/>
    <property type="project" value="Ensembl"/>
</dbReference>
<dbReference type="InterPro" id="IPR026229">
    <property type="entry name" value="VOPP1"/>
</dbReference>
<dbReference type="PANTHER" id="PTHR14971">
    <property type="entry name" value="VESICULAR, OVEREXPRESSED IN CANCER, PROSURVIVAL PROTEIN 1"/>
    <property type="match status" value="1"/>
</dbReference>
<dbReference type="PANTHER" id="PTHR14971:SF2">
    <property type="entry name" value="VESICULAR, OVEREXPRESSED IN CANCER, PROSURVIVAL PROTEIN 1"/>
    <property type="match status" value="1"/>
</dbReference>
<dbReference type="PRINTS" id="PR02068">
    <property type="entry name" value="VOPPROTEIN1"/>
</dbReference>
<sequence>MGRRLGRVAALLLGLLVECTEAKKHCWYFEGLYPTYYICRSYEDCCGSRCCVRALSIQRLWYFWFLLMMGVLFCCGAGFFIRRRMYPPPLIEEPTFNVSYTRQPPNPAPGAQQMGPPYYTDPGGPGMNPVGNTMAMAFQVQPNSPHGGTTYPPPPSYCNTPPPPYEQVVKDK</sequence>